<reference key="1">
    <citation type="journal article" date="2012" name="J. Proteome Res.">
        <title>Venomic and transcriptomic analysis of centipede Scolopendra subspinipes dehaani.</title>
        <authorList>
            <person name="Liu Z.C."/>
            <person name="Zhang R."/>
            <person name="Zhao F."/>
            <person name="Chen Z.M."/>
            <person name="Liu H.W."/>
            <person name="Wang Y.J."/>
            <person name="Jiang P."/>
            <person name="Zhang Y."/>
            <person name="Wu Y."/>
            <person name="Ding J.P."/>
            <person name="Lee W.H."/>
            <person name="Zhang Y."/>
        </authorList>
    </citation>
    <scope>NUCLEOTIDE SEQUENCE [MRNA]</scope>
    <scope>PROTEIN SEQUENCE OF 26-34 AND 387-395</scope>
    <scope>SUBCELLULAR LOCATION</scope>
    <scope>FUNCTION</scope>
    <source>
        <tissue>Venom</tissue>
        <tissue>Venom gland</tissue>
    </source>
</reference>
<name>TX14A_SCODE</name>
<comment type="function">
    <text evidence="1">Dose-dependently induces human platelet aggregation on both plasma rich platelet and washed platelet (max. response at 3.2 ug/mL) and causes hemolysis against mouse and rabbit erythrocytes (35 and 65% respectively at 5 ug/mL). Does not show hemolytic activity against human erythrocytes (even at 100 ug/mL).</text>
</comment>
<comment type="subunit">
    <text evidence="1">Heterodimer composed of subunits alpha and beta; probably disulfide-linked.</text>
</comment>
<comment type="subcellular location">
    <subcellularLocation>
        <location evidence="1">Secreted</location>
    </subcellularLocation>
</comment>
<comment type="tissue specificity">
    <text evidence="4">Expressed by the venom gland.</text>
</comment>
<sequence length="577" mass="62689">MGTSYRKLGYVLFLMLGMIVEEGIAYVRVKEKQSSPSFMGIYDESAVASDAVPCAEAGQSMLRQKGSAVDAAIATLLCIGVYNPQSSGIGGGSFMVIYDRSTRTPEVIDAREEAPAAATQKMFKGDKKLSSEGGLSIAVPGELRGMALAHERHGKLDWETLFQPAIRLAKEGFPVGSELAMALREQRSHILNSPTLKAVFTDPVSGDILKENDIVIRTKLGETLEKIAKNGADEFYEGQVAKDLINDIKSFGGIITAEDLKNYQPVLKNATVAHLSGCLTLYSVPPPSSGYILSFILRVLDKFHFSKASVSDIENATLTYHRFLETLKYAYAYRTKLGDERIENVSSVIAELTSEDVIEKTKQKIEDGKTYEPLHYGAQLATNDHGTAHISVVSREGDAVVVTTTINYWFGSGLRSPSTGVILNDEMDDFSAPDIQNIYGVPPSKANFIVPGKRPQSSTCPSIFVNKGGDVVMAIGASGGTRITSSVSLTSMRVLWLGRNIKEAIDEPRLHHQLLPDEIEYESKFPNEILEKLKAIGHKTKPAGAFGSLVVGIKRMKGGTLTANYDYRRGGSVDGSK</sequence>
<evidence type="ECO:0000269" key="1">
    <source>
    </source>
</evidence>
<evidence type="ECO:0000303" key="2">
    <source>
    </source>
</evidence>
<evidence type="ECO:0000305" key="3"/>
<evidence type="ECO:0000305" key="4">
    <source>
    </source>
</evidence>
<keyword id="KW-0204">Cytolysis</keyword>
<keyword id="KW-0903">Direct protein sequencing</keyword>
<keyword id="KW-1015">Disulfide bond</keyword>
<keyword id="KW-0354">Hemolysis</keyword>
<keyword id="KW-1199">Hemostasis impairing toxin</keyword>
<keyword id="KW-1202">Platelet aggregation activating toxin</keyword>
<keyword id="KW-0964">Secreted</keyword>
<keyword id="KW-0732">Signal</keyword>
<keyword id="KW-0800">Toxin</keyword>
<proteinExistence type="evidence at protein level"/>
<dbReference type="EMBL" id="KC144034">
    <property type="status" value="NOT_ANNOTATED_CDS"/>
    <property type="molecule type" value="mRNA"/>
</dbReference>
<dbReference type="SMR" id="P0DPU3"/>
<dbReference type="GO" id="GO:0005576">
    <property type="term" value="C:extracellular region"/>
    <property type="evidence" value="ECO:0007669"/>
    <property type="project" value="UniProtKB-SubCell"/>
</dbReference>
<dbReference type="GO" id="GO:0005886">
    <property type="term" value="C:plasma membrane"/>
    <property type="evidence" value="ECO:0007669"/>
    <property type="project" value="TreeGrafter"/>
</dbReference>
<dbReference type="GO" id="GO:0036374">
    <property type="term" value="F:glutathione hydrolase activity"/>
    <property type="evidence" value="ECO:0007669"/>
    <property type="project" value="InterPro"/>
</dbReference>
<dbReference type="GO" id="GO:0090729">
    <property type="term" value="F:toxin activity"/>
    <property type="evidence" value="ECO:0007669"/>
    <property type="project" value="UniProtKB-KW"/>
</dbReference>
<dbReference type="GO" id="GO:0006751">
    <property type="term" value="P:glutathione catabolic process"/>
    <property type="evidence" value="ECO:0007669"/>
    <property type="project" value="InterPro"/>
</dbReference>
<dbReference type="GO" id="GO:0031640">
    <property type="term" value="P:killing of cells of another organism"/>
    <property type="evidence" value="ECO:0007669"/>
    <property type="project" value="UniProtKB-KW"/>
</dbReference>
<dbReference type="FunFam" id="1.10.246.130:FF:000001">
    <property type="entry name" value="Gamma-glutamyltransferase 5 isoform 1"/>
    <property type="match status" value="1"/>
</dbReference>
<dbReference type="FunFam" id="3.60.20.40:FF:000001">
    <property type="entry name" value="Gamma-glutamyltranspeptidase 1"/>
    <property type="match status" value="1"/>
</dbReference>
<dbReference type="Gene3D" id="1.10.246.130">
    <property type="match status" value="1"/>
</dbReference>
<dbReference type="Gene3D" id="3.60.20.40">
    <property type="match status" value="1"/>
</dbReference>
<dbReference type="InterPro" id="IPR043138">
    <property type="entry name" value="GGT_lsub_C"/>
</dbReference>
<dbReference type="InterPro" id="IPR000101">
    <property type="entry name" value="GGT_peptidase"/>
</dbReference>
<dbReference type="InterPro" id="IPR043137">
    <property type="entry name" value="GGT_ssub"/>
</dbReference>
<dbReference type="InterPro" id="IPR029055">
    <property type="entry name" value="Ntn_hydrolases_N"/>
</dbReference>
<dbReference type="NCBIfam" id="TIGR00066">
    <property type="entry name" value="g_glut_trans"/>
    <property type="match status" value="1"/>
</dbReference>
<dbReference type="PANTHER" id="PTHR11686">
    <property type="entry name" value="GAMMA GLUTAMYL TRANSPEPTIDASE"/>
    <property type="match status" value="1"/>
</dbReference>
<dbReference type="PANTHER" id="PTHR11686:SF9">
    <property type="entry name" value="RE13973P"/>
    <property type="match status" value="1"/>
</dbReference>
<dbReference type="Pfam" id="PF01019">
    <property type="entry name" value="G_glu_transpept"/>
    <property type="match status" value="1"/>
</dbReference>
<dbReference type="PRINTS" id="PR01210">
    <property type="entry name" value="GGTRANSPTASE"/>
</dbReference>
<dbReference type="SUPFAM" id="SSF56235">
    <property type="entry name" value="N-terminal nucleophile aminohydrolases (Ntn hydrolases)"/>
    <property type="match status" value="1"/>
</dbReference>
<organism>
    <name type="scientific">Scolopendra dehaani</name>
    <name type="common">Thai centipede</name>
    <name type="synonym">Scolopendra subspinipes dehaani</name>
    <dbReference type="NCBI Taxonomy" id="2609776"/>
    <lineage>
        <taxon>Eukaryota</taxon>
        <taxon>Metazoa</taxon>
        <taxon>Ecdysozoa</taxon>
        <taxon>Arthropoda</taxon>
        <taxon>Myriapoda</taxon>
        <taxon>Chilopoda</taxon>
        <taxon>Pleurostigmophora</taxon>
        <taxon>Scolopendromorpha</taxon>
        <taxon>Scolopendridae</taxon>
        <taxon>Scolopendra</taxon>
    </lineage>
</organism>
<accession>P0DPU3</accession>
<protein>
    <recommendedName>
        <fullName evidence="2">Scoloptoxin SSD14</fullName>
        <shortName evidence="2">SLPTX-SSD14</shortName>
        <shortName evidence="2">Toxin-SSD14</shortName>
    </recommendedName>
    <component>
        <recommendedName>
            <fullName evidence="2">SLPTX-SSD14 subunit alpha</fullName>
        </recommendedName>
    </component>
    <component>
        <recommendedName>
            <fullName evidence="2">SLPTX-SSD14 subunit beta</fullName>
        </recommendedName>
    </component>
</protein>
<feature type="signal peptide" evidence="1">
    <location>
        <begin position="1"/>
        <end position="25"/>
    </location>
</feature>
<feature type="chain" id="PRO_0000446690" description="SLPTX-SSD14 subunit alpha" evidence="3">
    <location>
        <begin position="26"/>
        <end position="386"/>
    </location>
</feature>
<feature type="chain" id="PRO_0000446691" description="SLPTX-SSD14 subunit beta" evidence="3">
    <location>
        <begin position="387"/>
        <end position="577"/>
    </location>
</feature>